<organism>
    <name type="scientific">Schizosaccharomyces pombe (strain 972 / ATCC 24843)</name>
    <name type="common">Fission yeast</name>
    <dbReference type="NCBI Taxonomy" id="284812"/>
    <lineage>
        <taxon>Eukaryota</taxon>
        <taxon>Fungi</taxon>
        <taxon>Dikarya</taxon>
        <taxon>Ascomycota</taxon>
        <taxon>Taphrinomycotina</taxon>
        <taxon>Schizosaccharomycetes</taxon>
        <taxon>Schizosaccharomycetales</taxon>
        <taxon>Schizosaccharomycetaceae</taxon>
        <taxon>Schizosaccharomyces</taxon>
    </lineage>
</organism>
<comment type="function">
    <text>Component of the cleavage factor I (CF I) involved in pre-mRNA 3'-end processing.</text>
</comment>
<comment type="subunit">
    <text>Interacts with res2.</text>
</comment>
<comment type="subcellular location">
    <subcellularLocation>
        <location evidence="3">Nucleus</location>
    </subcellularLocation>
</comment>
<reference key="1">
    <citation type="journal article" date="2002" name="Nature">
        <title>The genome sequence of Schizosaccharomyces pombe.</title>
        <authorList>
            <person name="Wood V."/>
            <person name="Gwilliam R."/>
            <person name="Rajandream M.A."/>
            <person name="Lyne M.H."/>
            <person name="Lyne R."/>
            <person name="Stewart A."/>
            <person name="Sgouros J.G."/>
            <person name="Peat N."/>
            <person name="Hayles J."/>
            <person name="Baker S.G."/>
            <person name="Basham D."/>
            <person name="Bowman S."/>
            <person name="Brooks K."/>
            <person name="Brown D."/>
            <person name="Brown S."/>
            <person name="Chillingworth T."/>
            <person name="Churcher C.M."/>
            <person name="Collins M."/>
            <person name="Connor R."/>
            <person name="Cronin A."/>
            <person name="Davis P."/>
            <person name="Feltwell T."/>
            <person name="Fraser A."/>
            <person name="Gentles S."/>
            <person name="Goble A."/>
            <person name="Hamlin N."/>
            <person name="Harris D.E."/>
            <person name="Hidalgo J."/>
            <person name="Hodgson G."/>
            <person name="Holroyd S."/>
            <person name="Hornsby T."/>
            <person name="Howarth S."/>
            <person name="Huckle E.J."/>
            <person name="Hunt S."/>
            <person name="Jagels K."/>
            <person name="James K.D."/>
            <person name="Jones L."/>
            <person name="Jones M."/>
            <person name="Leather S."/>
            <person name="McDonald S."/>
            <person name="McLean J."/>
            <person name="Mooney P."/>
            <person name="Moule S."/>
            <person name="Mungall K.L."/>
            <person name="Murphy L.D."/>
            <person name="Niblett D."/>
            <person name="Odell C."/>
            <person name="Oliver K."/>
            <person name="O'Neil S."/>
            <person name="Pearson D."/>
            <person name="Quail M.A."/>
            <person name="Rabbinowitsch E."/>
            <person name="Rutherford K.M."/>
            <person name="Rutter S."/>
            <person name="Saunders D."/>
            <person name="Seeger K."/>
            <person name="Sharp S."/>
            <person name="Skelton J."/>
            <person name="Simmonds M.N."/>
            <person name="Squares R."/>
            <person name="Squares S."/>
            <person name="Stevens K."/>
            <person name="Taylor K."/>
            <person name="Taylor R.G."/>
            <person name="Tivey A."/>
            <person name="Walsh S.V."/>
            <person name="Warren T."/>
            <person name="Whitehead S."/>
            <person name="Woodward J.R."/>
            <person name="Volckaert G."/>
            <person name="Aert R."/>
            <person name="Robben J."/>
            <person name="Grymonprez B."/>
            <person name="Weltjens I."/>
            <person name="Vanstreels E."/>
            <person name="Rieger M."/>
            <person name="Schaefer M."/>
            <person name="Mueller-Auer S."/>
            <person name="Gabel C."/>
            <person name="Fuchs M."/>
            <person name="Duesterhoeft A."/>
            <person name="Fritzc C."/>
            <person name="Holzer E."/>
            <person name="Moestl D."/>
            <person name="Hilbert H."/>
            <person name="Borzym K."/>
            <person name="Langer I."/>
            <person name="Beck A."/>
            <person name="Lehrach H."/>
            <person name="Reinhardt R."/>
            <person name="Pohl T.M."/>
            <person name="Eger P."/>
            <person name="Zimmermann W."/>
            <person name="Wedler H."/>
            <person name="Wambutt R."/>
            <person name="Purnelle B."/>
            <person name="Goffeau A."/>
            <person name="Cadieu E."/>
            <person name="Dreano S."/>
            <person name="Gloux S."/>
            <person name="Lelaure V."/>
            <person name="Mottier S."/>
            <person name="Galibert F."/>
            <person name="Aves S.J."/>
            <person name="Xiang Z."/>
            <person name="Hunt C."/>
            <person name="Moore K."/>
            <person name="Hurst S.M."/>
            <person name="Lucas M."/>
            <person name="Rochet M."/>
            <person name="Gaillardin C."/>
            <person name="Tallada V.A."/>
            <person name="Garzon A."/>
            <person name="Thode G."/>
            <person name="Daga R.R."/>
            <person name="Cruzado L."/>
            <person name="Jimenez J."/>
            <person name="Sanchez M."/>
            <person name="del Rey F."/>
            <person name="Benito J."/>
            <person name="Dominguez A."/>
            <person name="Revuelta J.L."/>
            <person name="Moreno S."/>
            <person name="Armstrong J."/>
            <person name="Forsburg S.L."/>
            <person name="Cerutti L."/>
            <person name="Lowe T."/>
            <person name="McCombie W.R."/>
            <person name="Paulsen I."/>
            <person name="Potashkin J."/>
            <person name="Shpakovski G.V."/>
            <person name="Ussery D."/>
            <person name="Barrell B.G."/>
            <person name="Nurse P."/>
        </authorList>
    </citation>
    <scope>NUCLEOTIDE SEQUENCE [LARGE SCALE GENOMIC DNA]</scope>
    <source>
        <strain>972 / ATCC 24843</strain>
    </source>
</reference>
<reference key="2">
    <citation type="journal article" date="2001" name="Mol. Cell">
        <title>Transcriptional termination factors for RNA polymerase II in yeast.</title>
        <authorList>
            <person name="Aranda A."/>
            <person name="Proudfoot N."/>
        </authorList>
    </citation>
    <scope>CHARACTERIZATION</scope>
</reference>
<protein>
    <recommendedName>
        <fullName>Cleavage and termination factor 1</fullName>
    </recommendedName>
    <alternativeName>
        <fullName>Transcription termination factor ctf1</fullName>
    </alternativeName>
</protein>
<accession>O43040</accession>
<gene>
    <name type="primary">ctf1</name>
    <name type="ORF">SPBC3B9.11c</name>
</gene>
<keyword id="KW-0507">mRNA processing</keyword>
<keyword id="KW-0539">Nucleus</keyword>
<keyword id="KW-1185">Reference proteome</keyword>
<keyword id="KW-0694">RNA-binding</keyword>
<sequence length="363" mass="39963">MSMTAGNVVFVGNIPYDVSEQQMTEIFNQVGPVKTFKLVLDPETGSGKGYGFCEFFDSETTAMAVRKLNNSELGPRKIRVEFPSNDPRRNQSYEYTERTDRYMEQQNAHESSYNSRFIPPVLHSTSSLPASQGGGMPSPAIYSSSMATNLNKNINSTSVPAYNFHNSMTSDFDSASQPHTDAYNARTFQYNKSSQNKGDYTSGTSISNPTSIPLAPSVVQVLSTFSAQELLNMLSKLQTVVHIAPEEARRLLIANPALPYAAFQAMLLMNLVDANVLQQVVVAVKNKNMHQPASATSSPPSVPQKIPSSNHKSQQANGSDQGNEGKRMALIQQLLALTPEQINALPPAQRDQILSIRRQHFRQ</sequence>
<dbReference type="EMBL" id="CU329671">
    <property type="protein sequence ID" value="CAA17791.1"/>
    <property type="molecule type" value="Genomic_DNA"/>
</dbReference>
<dbReference type="PIR" id="T40350">
    <property type="entry name" value="T40350"/>
</dbReference>
<dbReference type="RefSeq" id="NP_596669.1">
    <property type="nucleotide sequence ID" value="NM_001022591.2"/>
</dbReference>
<dbReference type="SMR" id="O43040"/>
<dbReference type="BioGRID" id="277533">
    <property type="interactions" value="15"/>
</dbReference>
<dbReference type="FunCoup" id="O43040">
    <property type="interactions" value="330"/>
</dbReference>
<dbReference type="STRING" id="284812.O43040"/>
<dbReference type="iPTMnet" id="O43040"/>
<dbReference type="SwissPalm" id="O43040"/>
<dbReference type="PaxDb" id="4896-SPBC3B9.11c.1"/>
<dbReference type="EnsemblFungi" id="SPBC3B9.11c.1">
    <property type="protein sequence ID" value="SPBC3B9.11c.1:pep"/>
    <property type="gene ID" value="SPBC3B9.11c"/>
</dbReference>
<dbReference type="GeneID" id="2541018"/>
<dbReference type="KEGG" id="spo:2541018"/>
<dbReference type="PomBase" id="SPBC3B9.11c">
    <property type="gene designation" value="ctf1"/>
</dbReference>
<dbReference type="VEuPathDB" id="FungiDB:SPBC3B9.11c"/>
<dbReference type="eggNOG" id="KOG0108">
    <property type="taxonomic scope" value="Eukaryota"/>
</dbReference>
<dbReference type="HOGENOM" id="CLU_028601_0_0_1"/>
<dbReference type="InParanoid" id="O43040"/>
<dbReference type="OMA" id="NEYEIMG"/>
<dbReference type="PhylomeDB" id="O43040"/>
<dbReference type="PRO" id="PR:O43040"/>
<dbReference type="Proteomes" id="UP000002485">
    <property type="component" value="Chromosome II"/>
</dbReference>
<dbReference type="GO" id="GO:0005829">
    <property type="term" value="C:cytosol"/>
    <property type="evidence" value="ECO:0007005"/>
    <property type="project" value="PomBase"/>
</dbReference>
<dbReference type="GO" id="GO:0033620">
    <property type="term" value="C:Mei2 nuclear dot complex"/>
    <property type="evidence" value="ECO:0000314"/>
    <property type="project" value="PomBase"/>
</dbReference>
<dbReference type="GO" id="GO:0005847">
    <property type="term" value="C:mRNA cleavage and polyadenylation specificity factor complex"/>
    <property type="evidence" value="ECO:0000318"/>
    <property type="project" value="GO_Central"/>
</dbReference>
<dbReference type="GO" id="GO:0005848">
    <property type="term" value="C:mRNA cleavage stimulating factor complex"/>
    <property type="evidence" value="ECO:0000266"/>
    <property type="project" value="PomBase"/>
</dbReference>
<dbReference type="GO" id="GO:0005634">
    <property type="term" value="C:nucleus"/>
    <property type="evidence" value="ECO:0000314"/>
    <property type="project" value="PomBase"/>
</dbReference>
<dbReference type="GO" id="GO:0003729">
    <property type="term" value="F:mRNA binding"/>
    <property type="evidence" value="ECO:0000318"/>
    <property type="project" value="GO_Central"/>
</dbReference>
<dbReference type="GO" id="GO:0180010">
    <property type="term" value="P:co-transcriptional mRNA 3'-end processing, cleavage and polyadenylation pathway"/>
    <property type="evidence" value="ECO:0000353"/>
    <property type="project" value="PomBase"/>
</dbReference>
<dbReference type="CDD" id="cd12398">
    <property type="entry name" value="RRM_CSTF2_RNA15_like"/>
    <property type="match status" value="1"/>
</dbReference>
<dbReference type="FunFam" id="1.25.40.630:FF:000006">
    <property type="entry name" value="Cleavage and termination factor 1"/>
    <property type="match status" value="1"/>
</dbReference>
<dbReference type="FunFam" id="1.10.20.70:FF:000001">
    <property type="entry name" value="Cleavage stimulation factor subunit 2"/>
    <property type="match status" value="1"/>
</dbReference>
<dbReference type="Gene3D" id="1.25.40.630">
    <property type="match status" value="1"/>
</dbReference>
<dbReference type="Gene3D" id="3.30.70.330">
    <property type="match status" value="1"/>
</dbReference>
<dbReference type="Gene3D" id="1.10.20.70">
    <property type="entry name" value="Transcription termination and cleavage factor, C-terminal domain"/>
    <property type="match status" value="1"/>
</dbReference>
<dbReference type="InterPro" id="IPR025742">
    <property type="entry name" value="CSTF2_hinge"/>
</dbReference>
<dbReference type="InterPro" id="IPR026896">
    <property type="entry name" value="CSTF_C"/>
</dbReference>
<dbReference type="InterPro" id="IPR038192">
    <property type="entry name" value="CSTF_C_sf"/>
</dbReference>
<dbReference type="InterPro" id="IPR012677">
    <property type="entry name" value="Nucleotide-bd_a/b_plait_sf"/>
</dbReference>
<dbReference type="InterPro" id="IPR035979">
    <property type="entry name" value="RBD_domain_sf"/>
</dbReference>
<dbReference type="InterPro" id="IPR000504">
    <property type="entry name" value="RRM_dom"/>
</dbReference>
<dbReference type="PANTHER" id="PTHR45735">
    <property type="entry name" value="CLEAVAGE STIMULATION FACTOR SUBUNIT 2"/>
    <property type="match status" value="1"/>
</dbReference>
<dbReference type="PANTHER" id="PTHR45735:SF2">
    <property type="entry name" value="CLEAVAGE STIMULATION FACTOR SUBUNIT 2"/>
    <property type="match status" value="1"/>
</dbReference>
<dbReference type="Pfam" id="PF14327">
    <property type="entry name" value="CSTF2_hinge"/>
    <property type="match status" value="1"/>
</dbReference>
<dbReference type="Pfam" id="PF14304">
    <property type="entry name" value="CSTF_C"/>
    <property type="match status" value="1"/>
</dbReference>
<dbReference type="Pfam" id="PF00076">
    <property type="entry name" value="RRM_1"/>
    <property type="match status" value="1"/>
</dbReference>
<dbReference type="SMART" id="SM00360">
    <property type="entry name" value="RRM"/>
    <property type="match status" value="1"/>
</dbReference>
<dbReference type="SUPFAM" id="SSF54928">
    <property type="entry name" value="RNA-binding domain, RBD"/>
    <property type="match status" value="1"/>
</dbReference>
<dbReference type="PROSITE" id="PS50102">
    <property type="entry name" value="RRM"/>
    <property type="match status" value="1"/>
</dbReference>
<name>CTF1_SCHPO</name>
<evidence type="ECO:0000255" key="1">
    <source>
        <dbReference type="PROSITE-ProRule" id="PRU00176"/>
    </source>
</evidence>
<evidence type="ECO:0000256" key="2">
    <source>
        <dbReference type="SAM" id="MobiDB-lite"/>
    </source>
</evidence>
<evidence type="ECO:0000305" key="3"/>
<proteinExistence type="evidence at protein level"/>
<feature type="chain" id="PRO_0000081537" description="Cleavage and termination factor 1">
    <location>
        <begin position="1"/>
        <end position="363"/>
    </location>
</feature>
<feature type="domain" description="RRM" evidence="1">
    <location>
        <begin position="7"/>
        <end position="85"/>
    </location>
</feature>
<feature type="region of interest" description="Disordered" evidence="2">
    <location>
        <begin position="291"/>
        <end position="325"/>
    </location>
</feature>
<feature type="compositionally biased region" description="Polar residues" evidence="2">
    <location>
        <begin position="306"/>
        <end position="322"/>
    </location>
</feature>